<reference key="1">
    <citation type="journal article" date="1996" name="Biosci. Biotechnol. Biochem.">
        <title>Isolation and characterization of the heat-responsive genes in Escherichia coli.</title>
        <authorList>
            <person name="Utsumi R."/>
            <person name="Horie T."/>
            <person name="Katoh A."/>
            <person name="Kaino Y."/>
            <person name="Tanabe H."/>
            <person name="Noda M."/>
        </authorList>
    </citation>
    <scope>NUCLEOTIDE SEQUENCE [GENOMIC DNA]</scope>
    <scope>FUNCTION</scope>
    <scope>ACTIVE SITE</scope>
</reference>
<reference key="2">
    <citation type="journal article" date="1997" name="Science">
        <title>The complete genome sequence of Escherichia coli K-12.</title>
        <authorList>
            <person name="Blattner F.R."/>
            <person name="Plunkett G. III"/>
            <person name="Bloch C.A."/>
            <person name="Perna N.T."/>
            <person name="Burland V."/>
            <person name="Riley M."/>
            <person name="Collado-Vides J."/>
            <person name="Glasner J.D."/>
            <person name="Rode C.K."/>
            <person name="Mayhew G.F."/>
            <person name="Gregor J."/>
            <person name="Davis N.W."/>
            <person name="Kirkpatrick H.A."/>
            <person name="Goeden M.A."/>
            <person name="Rose D.J."/>
            <person name="Mau B."/>
            <person name="Shao Y."/>
        </authorList>
    </citation>
    <scope>NUCLEOTIDE SEQUENCE [LARGE SCALE GENOMIC DNA]</scope>
    <source>
        <strain>K12 / MG1655 / ATCC 47076</strain>
    </source>
</reference>
<reference key="3">
    <citation type="journal article" date="2006" name="Mol. Syst. Biol.">
        <title>Highly accurate genome sequences of Escherichia coli K-12 strains MG1655 and W3110.</title>
        <authorList>
            <person name="Hayashi K."/>
            <person name="Morooka N."/>
            <person name="Yamamoto Y."/>
            <person name="Fujita K."/>
            <person name="Isono K."/>
            <person name="Choi S."/>
            <person name="Ohtsubo E."/>
            <person name="Baba T."/>
            <person name="Wanner B.L."/>
            <person name="Mori H."/>
            <person name="Horiuchi T."/>
        </authorList>
    </citation>
    <scope>NUCLEOTIDE SEQUENCE [LARGE SCALE GENOMIC DNA]</scope>
    <source>
        <strain>K12 / W3110 / ATCC 27325 / DSM 5911</strain>
    </source>
</reference>
<reference key="4">
    <citation type="journal article" date="1996" name="DNA Res.">
        <title>A 718-kb DNA sequence of the Escherichia coli K-12 genome corresponding to the 12.7-28.0 min region on the linkage map.</title>
        <authorList>
            <person name="Oshima T."/>
            <person name="Aiba H."/>
            <person name="Baba T."/>
            <person name="Fujita K."/>
            <person name="Hayashi K."/>
            <person name="Honjo A."/>
            <person name="Ikemoto K."/>
            <person name="Inada T."/>
            <person name="Itoh T."/>
            <person name="Kajihara M."/>
            <person name="Kanai K."/>
            <person name="Kashimoto K."/>
            <person name="Kimura S."/>
            <person name="Kitagawa M."/>
            <person name="Makino K."/>
            <person name="Masuda S."/>
            <person name="Miki T."/>
            <person name="Mizobuchi K."/>
            <person name="Mori H."/>
            <person name="Motomura K."/>
            <person name="Nakamura Y."/>
            <person name="Nashimoto H."/>
            <person name="Nishio Y."/>
            <person name="Saito N."/>
            <person name="Sampei G."/>
            <person name="Seki Y."/>
            <person name="Tagami H."/>
            <person name="Takemoto K."/>
            <person name="Wada C."/>
            <person name="Yamamoto Y."/>
            <person name="Yano M."/>
            <person name="Horiuchi T."/>
        </authorList>
    </citation>
    <scope>NUCLEOTIDE SEQUENCE [LARGE SCALE GENOMIC DNA] OF 277-658</scope>
    <source>
        <strain>K12 / W3110 / ATCC 27325 / DSM 5911</strain>
    </source>
</reference>
<reference key="5">
    <citation type="journal article" date="2004" name="J. Biol. Chem.">
        <title>Phosphotransferase-mediated transport of the osmolyte 2-O-alpha-mannosyl-D-glycerate in Escherichia coli occurs by the product of the mngA (hrsA) gene and is regulated by the mngR (farR) gene product acting as repressor.</title>
        <authorList>
            <person name="Sampaio M.-M."/>
            <person name="Chevance F."/>
            <person name="Dippel R."/>
            <person name="Eppler T."/>
            <person name="Schlegel A."/>
            <person name="Boos W."/>
            <person name="Lu Y.-J."/>
            <person name="Rock C.O."/>
        </authorList>
    </citation>
    <scope>FUNCTION</scope>
    <scope>CATALYTIC ACTIVITY</scope>
    <scope>BIOPHYSICOCHEMICAL PROPERTIES</scope>
    <scope>DISRUPTION PHENOTYPE</scope>
    <scope>INDUCTION</scope>
    <scope>SUBCELLULAR LOCATION</scope>
</reference>
<reference key="6">
    <citation type="journal article" date="2005" name="Science">
        <title>Global topology analysis of the Escherichia coli inner membrane proteome.</title>
        <authorList>
            <person name="Daley D.O."/>
            <person name="Rapp M."/>
            <person name="Granseth E."/>
            <person name="Melen K."/>
            <person name="Drew D."/>
            <person name="von Heijne G."/>
        </authorList>
    </citation>
    <scope>TOPOLOGY [LARGE SCALE ANALYSIS]</scope>
    <source>
        <strain>K12 / MG1655 / ATCC 47076</strain>
    </source>
</reference>
<organism>
    <name type="scientific">Escherichia coli (strain K12)</name>
    <dbReference type="NCBI Taxonomy" id="83333"/>
    <lineage>
        <taxon>Bacteria</taxon>
        <taxon>Pseudomonadati</taxon>
        <taxon>Pseudomonadota</taxon>
        <taxon>Gammaproteobacteria</taxon>
        <taxon>Enterobacterales</taxon>
        <taxon>Enterobacteriaceae</taxon>
        <taxon>Escherichia</taxon>
    </lineage>
</organism>
<comment type="function">
    <text evidence="5 6">The phosphoenolpyruvate-dependent sugar phosphotransferase system (sugar PTS), a major carbohydrate active transport system, catalyzes the phosphorylation of incoming sugar substrates concomitantly with their translocation across the cell membrane (PubMed:14645248, PubMed:9063979). This system is involved in mannosyl-D-glycerate transport (PubMed:14645248). Also involved in thermoinduction of ompC (PubMed:9063979).</text>
</comment>
<comment type="catalytic activity">
    <reaction evidence="5">
        <text>(2R)-2-O-(alpha-D-mannosyl)-glycerate(out) + N(pros)-phospho-L-histidyl-[protein] = (2R)-2-O-(6-phospho-alpha-D-mannosyl)-glycerate(in) + L-histidyl-[protein]</text>
        <dbReference type="Rhea" id="RHEA:33307"/>
        <dbReference type="Rhea" id="RHEA-COMP:9745"/>
        <dbReference type="Rhea" id="RHEA-COMP:9746"/>
        <dbReference type="ChEBI" id="CHEBI:29979"/>
        <dbReference type="ChEBI" id="CHEBI:57541"/>
        <dbReference type="ChEBI" id="CHEBI:60331"/>
        <dbReference type="ChEBI" id="CHEBI:64837"/>
        <dbReference type="EC" id="2.7.1.195"/>
    </reaction>
</comment>
<comment type="biophysicochemical properties">
    <kinetics>
        <KM evidence="5">10 uM for mannosyl-D-glycerate</KM>
        <Vmax evidence="5">0.65 nmol/min/mg enzyme for mannosyl-D-glycerate</Vmax>
    </kinetics>
</comment>
<comment type="interaction">
    <interactant intactId="EBI-558542">
        <id>P54745</id>
    </interactant>
    <interactant intactId="EBI-558482">
        <id>P0ACA3</id>
        <label>sspA</label>
    </interactant>
    <organismsDiffer>false</organismsDiffer>
    <experiments>5</experiments>
</comment>
<comment type="subcellular location">
    <subcellularLocation>
        <location evidence="4 10">Cell inner membrane</location>
        <topology evidence="4 10">Multi-pass membrane protein</topology>
    </subcellularLocation>
</comment>
<comment type="induction">
    <text evidence="5">Induced by mannosyl-D-glycerate. Repressed by MngR.</text>
</comment>
<comment type="domain">
    <text evidence="2">The PTS EIIA type-2 domain is phosphorylated by phospho-HPr on a histidyl residue. Then, it transfers the phosphoryl group to the PTS EIIB type-2 domain.</text>
</comment>
<comment type="domain">
    <text evidence="3">The PTS EIIB type-2 domain is phosphorylated by phospho-EIIA on a cysteinyl residue. Then, it transfers the phosphoryl group to the sugar substrate concomitantly with the sugar uptake processed by the PTS EIIC type-2 domain.</text>
</comment>
<comment type="domain">
    <text evidence="4">The EIIC type-2 domain forms the PTS system translocation channel and contains the specific substrate-binding site.</text>
</comment>
<comment type="disruption phenotype">
    <text evidence="5">Cells lacking this gene are unable to transport mannosyl-D-glycerate.</text>
</comment>
<dbReference type="EC" id="2.7.1.195" evidence="5"/>
<dbReference type="EMBL" id="D64014">
    <property type="protein sequence ID" value="BAA10893.1"/>
    <property type="molecule type" value="Genomic_DNA"/>
</dbReference>
<dbReference type="EMBL" id="U00096">
    <property type="protein sequence ID" value="AAC73825.1"/>
    <property type="molecule type" value="Genomic_DNA"/>
</dbReference>
<dbReference type="EMBL" id="AP009048">
    <property type="protein sequence ID" value="BAA35397.2"/>
    <property type="molecule type" value="Genomic_DNA"/>
</dbReference>
<dbReference type="PIR" id="JC4598">
    <property type="entry name" value="JC4598"/>
</dbReference>
<dbReference type="RefSeq" id="NP_415259.1">
    <property type="nucleotide sequence ID" value="NC_000913.3"/>
</dbReference>
<dbReference type="SMR" id="P54745"/>
<dbReference type="BioGRID" id="4263541">
    <property type="interactions" value="15"/>
</dbReference>
<dbReference type="BioGRID" id="849731">
    <property type="interactions" value="1"/>
</dbReference>
<dbReference type="DIP" id="DIP-9939N"/>
<dbReference type="FunCoup" id="P54745">
    <property type="interactions" value="199"/>
</dbReference>
<dbReference type="IntAct" id="P54745">
    <property type="interactions" value="1"/>
</dbReference>
<dbReference type="STRING" id="511145.b0731"/>
<dbReference type="TCDB" id="4.A.2.1.3">
    <property type="family name" value="the pts fructose-mannitol (fru) family"/>
</dbReference>
<dbReference type="PaxDb" id="511145-b0731"/>
<dbReference type="EnsemblBacteria" id="AAC73825">
    <property type="protein sequence ID" value="AAC73825"/>
    <property type="gene ID" value="b0731"/>
</dbReference>
<dbReference type="GeneID" id="945355"/>
<dbReference type="KEGG" id="ecj:JW0720"/>
<dbReference type="KEGG" id="eco:b0731"/>
<dbReference type="PATRIC" id="fig|511145.12.peg.761"/>
<dbReference type="EchoBASE" id="EB3024"/>
<dbReference type="eggNOG" id="COG1299">
    <property type="taxonomic scope" value="Bacteria"/>
</dbReference>
<dbReference type="eggNOG" id="COG1445">
    <property type="taxonomic scope" value="Bacteria"/>
</dbReference>
<dbReference type="eggNOG" id="COG1762">
    <property type="taxonomic scope" value="Bacteria"/>
</dbReference>
<dbReference type="HOGENOM" id="CLU_013155_1_2_6"/>
<dbReference type="InParanoid" id="P54745"/>
<dbReference type="OMA" id="QENSWLW"/>
<dbReference type="OrthoDB" id="9782569at2"/>
<dbReference type="PhylomeDB" id="P54745"/>
<dbReference type="BioCyc" id="EcoCyc:HRSA-MONOMER"/>
<dbReference type="BioCyc" id="MetaCyc:HRSA-MONOMER"/>
<dbReference type="BRENDA" id="2.7.1.195">
    <property type="organism ID" value="2026"/>
</dbReference>
<dbReference type="PRO" id="PR:P54745"/>
<dbReference type="Proteomes" id="UP000000625">
    <property type="component" value="Chromosome"/>
</dbReference>
<dbReference type="GO" id="GO:0005886">
    <property type="term" value="C:plasma membrane"/>
    <property type="evidence" value="ECO:0000314"/>
    <property type="project" value="EcoCyc"/>
</dbReference>
<dbReference type="GO" id="GO:0005351">
    <property type="term" value="F:carbohydrate:proton symporter activity"/>
    <property type="evidence" value="ECO:0007669"/>
    <property type="project" value="InterPro"/>
</dbReference>
<dbReference type="GO" id="GO:0016301">
    <property type="term" value="F:kinase activity"/>
    <property type="evidence" value="ECO:0007669"/>
    <property type="project" value="UniProtKB-KW"/>
</dbReference>
<dbReference type="GO" id="GO:0022877">
    <property type="term" value="F:protein-N(PI)-phosphohistidine-fructose phosphotransferase system transporter activity"/>
    <property type="evidence" value="ECO:0007669"/>
    <property type="project" value="InterPro"/>
</dbReference>
<dbReference type="GO" id="GO:0090581">
    <property type="term" value="F:protein-phosphocysteine-mannosylglycerate-phosphotransferase system transporter activity"/>
    <property type="evidence" value="ECO:0000314"/>
    <property type="project" value="EcoCyc"/>
</dbReference>
<dbReference type="GO" id="GO:0090563">
    <property type="term" value="F:protein-phosphocysteine-sugar phosphotransferase activity"/>
    <property type="evidence" value="ECO:0000255"/>
    <property type="project" value="EcoCyc"/>
</dbReference>
<dbReference type="GO" id="GO:0051476">
    <property type="term" value="P:phosphoenolpyruvate-dependent mannosylglycerate phosphotransferase system"/>
    <property type="evidence" value="ECO:0000314"/>
    <property type="project" value="EcoCyc"/>
</dbReference>
<dbReference type="GO" id="GO:0009401">
    <property type="term" value="P:phosphoenolpyruvate-dependent sugar phosphotransferase system"/>
    <property type="evidence" value="ECO:0000314"/>
    <property type="project" value="EcoCyc"/>
</dbReference>
<dbReference type="CDD" id="cd00211">
    <property type="entry name" value="PTS_IIA_fru"/>
    <property type="match status" value="1"/>
</dbReference>
<dbReference type="CDD" id="cd05569">
    <property type="entry name" value="PTS_IIB_fructose"/>
    <property type="match status" value="1"/>
</dbReference>
<dbReference type="FunFam" id="3.40.930.10:FF:000025">
    <property type="entry name" value="PTS 2-O-a-mannosyl-D-glycerate transporter subunit IIABC"/>
    <property type="match status" value="1"/>
</dbReference>
<dbReference type="FunFam" id="3.40.50.2300:FF:000014">
    <property type="entry name" value="PTS system fructose-like transporter subunit IIB"/>
    <property type="match status" value="1"/>
</dbReference>
<dbReference type="Gene3D" id="3.40.50.2300">
    <property type="match status" value="1"/>
</dbReference>
<dbReference type="Gene3D" id="3.40.930.10">
    <property type="entry name" value="Mannitol-specific EII, Chain A"/>
    <property type="match status" value="1"/>
</dbReference>
<dbReference type="InterPro" id="IPR050864">
    <property type="entry name" value="Bacterial_PTS_Sugar_Transport"/>
</dbReference>
<dbReference type="InterPro" id="IPR016152">
    <property type="entry name" value="PTrfase/Anion_transptr"/>
</dbReference>
<dbReference type="InterPro" id="IPR002178">
    <property type="entry name" value="PTS_EIIA_type-2_dom"/>
</dbReference>
<dbReference type="InterPro" id="IPR036095">
    <property type="entry name" value="PTS_EIIB-like_sf"/>
</dbReference>
<dbReference type="InterPro" id="IPR013011">
    <property type="entry name" value="PTS_EIIB_2"/>
</dbReference>
<dbReference type="InterPro" id="IPR003501">
    <property type="entry name" value="PTS_EIIB_2/3"/>
</dbReference>
<dbReference type="InterPro" id="IPR003352">
    <property type="entry name" value="PTS_EIIC"/>
</dbReference>
<dbReference type="InterPro" id="IPR013014">
    <property type="entry name" value="PTS_EIIC_2"/>
</dbReference>
<dbReference type="InterPro" id="IPR004715">
    <property type="entry name" value="PTS_IIA_fruc"/>
</dbReference>
<dbReference type="InterPro" id="IPR003353">
    <property type="entry name" value="PTS_IIB_fruc"/>
</dbReference>
<dbReference type="InterPro" id="IPR006327">
    <property type="entry name" value="PTS_IIC_fruc"/>
</dbReference>
<dbReference type="NCBIfam" id="TIGR00829">
    <property type="entry name" value="FRU"/>
    <property type="match status" value="1"/>
</dbReference>
<dbReference type="NCBIfam" id="TIGR00848">
    <property type="entry name" value="fruA"/>
    <property type="match status" value="1"/>
</dbReference>
<dbReference type="NCBIfam" id="NF007293">
    <property type="entry name" value="PRK09765.1"/>
    <property type="match status" value="1"/>
</dbReference>
<dbReference type="NCBIfam" id="TIGR01427">
    <property type="entry name" value="PTS_IIC_fructo"/>
    <property type="match status" value="1"/>
</dbReference>
<dbReference type="PANTHER" id="PTHR30505">
    <property type="entry name" value="FRUCTOSE-LIKE PERMEASE"/>
    <property type="match status" value="1"/>
</dbReference>
<dbReference type="PANTHER" id="PTHR30505:SF28">
    <property type="entry name" value="PTS SYSTEM 2-O-ALPHA-MANNOSYL-D-GLYCERATE-SPECIFIC EIIABC COMPONENT"/>
    <property type="match status" value="1"/>
</dbReference>
<dbReference type="Pfam" id="PF00359">
    <property type="entry name" value="PTS_EIIA_2"/>
    <property type="match status" value="1"/>
</dbReference>
<dbReference type="Pfam" id="PF02378">
    <property type="entry name" value="PTS_EIIC"/>
    <property type="match status" value="1"/>
</dbReference>
<dbReference type="Pfam" id="PF02302">
    <property type="entry name" value="PTS_IIB"/>
    <property type="match status" value="1"/>
</dbReference>
<dbReference type="SUPFAM" id="SSF55804">
    <property type="entry name" value="Phoshotransferase/anion transport protein"/>
    <property type="match status" value="1"/>
</dbReference>
<dbReference type="SUPFAM" id="SSF52794">
    <property type="entry name" value="PTS system IIB component-like"/>
    <property type="match status" value="1"/>
</dbReference>
<dbReference type="PROSITE" id="PS51094">
    <property type="entry name" value="PTS_EIIA_TYPE_2"/>
    <property type="match status" value="1"/>
</dbReference>
<dbReference type="PROSITE" id="PS00372">
    <property type="entry name" value="PTS_EIIA_TYPE_2_HIS"/>
    <property type="match status" value="1"/>
</dbReference>
<dbReference type="PROSITE" id="PS51099">
    <property type="entry name" value="PTS_EIIB_TYPE_2"/>
    <property type="match status" value="1"/>
</dbReference>
<dbReference type="PROSITE" id="PS51104">
    <property type="entry name" value="PTS_EIIC_TYPE_2"/>
    <property type="match status" value="1"/>
</dbReference>
<feature type="chain" id="PRO_0000186699" description="PTS system 2-O-alpha-mannosyl-D-glycerate-specific EIIABC component">
    <location>
        <begin position="1"/>
        <end position="658"/>
    </location>
</feature>
<feature type="topological domain" description="Periplasmic" evidence="1">
    <location>
        <begin position="1"/>
        <end position="313"/>
    </location>
</feature>
<feature type="transmembrane region" description="Helical" evidence="4">
    <location>
        <begin position="314"/>
        <end position="334"/>
    </location>
</feature>
<feature type="topological domain" description="Cytoplasmic" evidence="1">
    <location>
        <begin position="335"/>
        <end position="358"/>
    </location>
</feature>
<feature type="transmembrane region" description="Helical" evidence="4">
    <location>
        <begin position="359"/>
        <end position="379"/>
    </location>
</feature>
<feature type="topological domain" description="Periplasmic" evidence="1">
    <location>
        <begin position="380"/>
        <end position="389"/>
    </location>
</feature>
<feature type="transmembrane region" description="Helical" evidence="4">
    <location>
        <begin position="390"/>
        <end position="410"/>
    </location>
</feature>
<feature type="topological domain" description="Cytoplasmic" evidence="1">
    <location>
        <begin position="411"/>
        <end position="433"/>
    </location>
</feature>
<feature type="transmembrane region" description="Helical" evidence="4">
    <location>
        <begin position="434"/>
        <end position="454"/>
    </location>
</feature>
<feature type="topological domain" description="Periplasmic" evidence="1">
    <location>
        <begin position="455"/>
        <end position="474"/>
    </location>
</feature>
<feature type="transmembrane region" description="Helical" evidence="4">
    <location>
        <begin position="475"/>
        <end position="495"/>
    </location>
</feature>
<feature type="topological domain" description="Cytoplasmic" evidence="1">
    <location>
        <begin position="496"/>
        <end position="500"/>
    </location>
</feature>
<feature type="transmembrane region" description="Helical" evidence="4">
    <location>
        <begin position="501"/>
        <end position="521"/>
    </location>
</feature>
<feature type="topological domain" description="Periplasmic" evidence="1">
    <location>
        <begin position="522"/>
        <end position="551"/>
    </location>
</feature>
<feature type="transmembrane region" description="Helical" evidence="4">
    <location>
        <begin position="552"/>
        <end position="572"/>
    </location>
</feature>
<feature type="topological domain" description="Cytoplasmic" evidence="1">
    <location>
        <position position="573"/>
    </location>
</feature>
<feature type="transmembrane region" description="Helical" evidence="4">
    <location>
        <begin position="574"/>
        <end position="594"/>
    </location>
</feature>
<feature type="topological domain" description="Periplasmic" evidence="1">
    <location>
        <begin position="595"/>
        <end position="620"/>
    </location>
</feature>
<feature type="transmembrane region" description="Helical" evidence="4">
    <location>
        <begin position="621"/>
        <end position="641"/>
    </location>
</feature>
<feature type="topological domain" description="Cytoplasmic" evidence="1">
    <location>
        <begin position="642"/>
        <end position="658"/>
    </location>
</feature>
<feature type="domain" description="PTS EIIA type-2" evidence="2">
    <location>
        <begin position="25"/>
        <end position="171"/>
    </location>
</feature>
<feature type="domain" description="PTS EIIB type-2" evidence="3">
    <location>
        <begin position="186"/>
        <end position="282"/>
    </location>
</feature>
<feature type="domain" description="PTS EIIC type-2" evidence="4">
    <location>
        <begin position="306"/>
        <end position="641"/>
    </location>
</feature>
<feature type="active site" description="Tele-phosphohistidine intermediate; for EIIA activity" evidence="2 11">
    <location>
        <position position="87"/>
    </location>
</feature>
<feature type="active site" description="Phosphocysteine intermediate; for EIIB activity" evidence="11">
    <location>
        <position position="192"/>
    </location>
</feature>
<feature type="modified residue" description="Phosphohistidine; by HPr" evidence="9">
    <location>
        <position position="87"/>
    </location>
</feature>
<feature type="modified residue" description="Phosphocysteine; by EIIA" evidence="3 9">
    <location>
        <position position="192"/>
    </location>
</feature>
<gene>
    <name evidence="7" type="primary">mngA</name>
    <name evidence="8" type="synonym">hrsA</name>
    <name type="ordered locus">b0731</name>
    <name type="ordered locus">JW0720</name>
</gene>
<proteinExistence type="evidence at protein level"/>
<sequence>MVLFYRAHWRDYKNDQVRIMMNLTTLTHRDALCLNARFTSREEAIHALTQRLAALGKISSTEQFLEEVYRRESLGPTALGEGLAVPHGKTAAVKEAAFAVATLSEPLQWEGVDGPEAVDLVVLLAIPPNEAGTTHMQLLTALTTRLADDEIRARIQSATTPDELLSALDDKGGTQPSASFSNAPTIVCVTACPAGIAHTYMAAEYLEKAGRKLGVNVYVEKQGANGIEGRLTADQLNSATACIFAAEVAIKESERFNGIPALSVPVAEPIRHAEALIQQALTLKRSDETRTVQQDTQPVKSVKTELKQALLSGISFAVPLIVAGGTVLAVAVLLSQIFGLQDLFNEENSWLWMYRKLGGGLLGILMVPVLAAYTAYSLADKPALAPGFAAGLAANMIGSGFLGAVVGGLIAGYLMRWVKNHLRLSSKFNGFLTFYLYPVLGTLGAGSLMLFVVGEPVAWINNSLTAWLNGLSGSNALLLGAILGFMCSFDLGGPVNKAAYAFCLGAMANGVYGPYAIFASVKMVSAFTVTASTMLAPRLFKEFEIETGKSTWLLGLAGITEGAIPMAIEDPLRVIGSFVLGSMVTGAIVGAMNIGLSTPGAGIFSLFLLHDNGAGGVMAAIGWFGAALVGAAISTAILLMWRRHAVKHGNYLTDGVMP</sequence>
<evidence type="ECO:0000255" key="1"/>
<evidence type="ECO:0000255" key="2">
    <source>
        <dbReference type="PROSITE-ProRule" id="PRU00417"/>
    </source>
</evidence>
<evidence type="ECO:0000255" key="3">
    <source>
        <dbReference type="PROSITE-ProRule" id="PRU00422"/>
    </source>
</evidence>
<evidence type="ECO:0000255" key="4">
    <source>
        <dbReference type="PROSITE-ProRule" id="PRU00427"/>
    </source>
</evidence>
<evidence type="ECO:0000269" key="5">
    <source>
    </source>
</evidence>
<evidence type="ECO:0000269" key="6">
    <source>
    </source>
</evidence>
<evidence type="ECO:0000303" key="7">
    <source>
    </source>
</evidence>
<evidence type="ECO:0000303" key="8">
    <source>
    </source>
</evidence>
<evidence type="ECO:0000305" key="9"/>
<evidence type="ECO:0000305" key="10">
    <source>
    </source>
</evidence>
<evidence type="ECO:0000305" key="11">
    <source>
    </source>
</evidence>
<accession>P54745</accession>
<name>MNGA_ECOLI</name>
<keyword id="KW-0997">Cell inner membrane</keyword>
<keyword id="KW-1003">Cell membrane</keyword>
<keyword id="KW-0418">Kinase</keyword>
<keyword id="KW-0472">Membrane</keyword>
<keyword id="KW-0597">Phosphoprotein</keyword>
<keyword id="KW-0598">Phosphotransferase system</keyword>
<keyword id="KW-1185">Reference proteome</keyword>
<keyword id="KW-0762">Sugar transport</keyword>
<keyword id="KW-0808">Transferase</keyword>
<keyword id="KW-0812">Transmembrane</keyword>
<keyword id="KW-1133">Transmembrane helix</keyword>
<keyword id="KW-0813">Transport</keyword>
<protein>
    <recommendedName>
        <fullName evidence="7">PTS system 2-O-alpha-mannosyl-D-glycerate-specific EIIABC component</fullName>
    </recommendedName>
    <alternativeName>
        <fullName evidence="7">2-O-alpha-mannosyl-D-glycerate-specific phosphotransferase enzyme MngA</fullName>
    </alternativeName>
    <alternativeName>
        <fullName evidence="7">Protein-Npi-phosphohistidine--2-O-alpha-mannosyl-D-glycerate phosphotransferase</fullName>
    </alternativeName>
    <domain>
        <recommendedName>
            <fullName evidence="7">2-O-alpha-mannosyl-D-glycerate-specific phosphotransferase enzyme IIA component</fullName>
        </recommendedName>
        <alternativeName>
            <fullName evidence="7">PTS system EIIA component</fullName>
        </alternativeName>
    </domain>
    <domain>
        <recommendedName>
            <fullName evidence="7">2-O-alpha-mannosyl-D-glycerate-specific phosphotransferase enzyme IIB component</fullName>
            <ecNumber evidence="5">2.7.1.195</ecNumber>
        </recommendedName>
        <alternativeName>
            <fullName evidence="7">PTS system EIIB component</fullName>
        </alternativeName>
    </domain>
    <domain>
        <recommendedName>
            <fullName evidence="7">2-O-alpha-mannosyl-D-glycerate-specific permease IIC component</fullName>
        </recommendedName>
        <alternativeName>
            <fullName evidence="7">PTS system EIIC component</fullName>
        </alternativeName>
    </domain>
</protein>